<protein>
    <recommendedName>
        <fullName evidence="3">Autophagy-related protein 8</fullName>
    </recommendedName>
    <alternativeName>
        <fullName evidence="1">Autophagy-related ubiquitin-like modifier ATG8</fullName>
    </alternativeName>
</protein>
<reference key="1">
    <citation type="journal article" date="2012" name="PLoS Pathog.">
        <title>Diverse lifestyles and strategies of plant pathogenesis encoded in the genomes of eighteen Dothideomycetes fungi.</title>
        <authorList>
            <person name="Ohm R.A."/>
            <person name="Feau N."/>
            <person name="Henrissat B."/>
            <person name="Schoch C.L."/>
            <person name="Horwitz B.A."/>
            <person name="Barry K.W."/>
            <person name="Condon B.J."/>
            <person name="Copeland A.C."/>
            <person name="Dhillon B."/>
            <person name="Glaser F."/>
            <person name="Hesse C.N."/>
            <person name="Kosti I."/>
            <person name="LaButti K."/>
            <person name="Lindquist E.A."/>
            <person name="Lucas S."/>
            <person name="Salamov A.A."/>
            <person name="Bradshaw R.E."/>
            <person name="Ciuffetti L."/>
            <person name="Hamelin R.C."/>
            <person name="Kema G.H.J."/>
            <person name="Lawrence C."/>
            <person name="Scott J.A."/>
            <person name="Spatafora J.W."/>
            <person name="Turgeon B.G."/>
            <person name="de Wit P.J.G.M."/>
            <person name="Zhong S."/>
            <person name="Goodwin S.B."/>
            <person name="Grigoriev I.V."/>
        </authorList>
    </citation>
    <scope>NUCLEOTIDE SEQUENCE [LARGE SCALE GENOMIC DNA]</scope>
    <source>
        <strain>C5 / ATCC 48332 / race O</strain>
    </source>
</reference>
<reference key="2">
    <citation type="journal article" date="2013" name="PLoS Genet.">
        <title>Comparative genome structure, secondary metabolite, and effector coding capacity across Cochliobolus pathogens.</title>
        <authorList>
            <person name="Condon B.J."/>
            <person name="Leng Y."/>
            <person name="Wu D."/>
            <person name="Bushley K.E."/>
            <person name="Ohm R.A."/>
            <person name="Otillar R."/>
            <person name="Martin J."/>
            <person name="Schackwitz W."/>
            <person name="Grimwood J."/>
            <person name="MohdZainudin N."/>
            <person name="Xue C."/>
            <person name="Wang R."/>
            <person name="Manning V.A."/>
            <person name="Dhillon B."/>
            <person name="Tu Z.J."/>
            <person name="Steffenson B.J."/>
            <person name="Salamov A."/>
            <person name="Sun H."/>
            <person name="Lowry S."/>
            <person name="LaButti K."/>
            <person name="Han J."/>
            <person name="Copeland A."/>
            <person name="Lindquist E."/>
            <person name="Barry K."/>
            <person name="Schmutz J."/>
            <person name="Baker S.E."/>
            <person name="Ciuffetti L.M."/>
            <person name="Grigoriev I.V."/>
            <person name="Zhong S."/>
            <person name="Turgeon B.G."/>
        </authorList>
    </citation>
    <scope>NUCLEOTIDE SEQUENCE [LARGE SCALE GENOMIC DNA]</scope>
    <source>
        <strain>C5 / ATCC 48332 / race O</strain>
    </source>
</reference>
<reference key="3">
    <citation type="journal article" date="2017" name="Fungal Biol.">
        <title>Characterization of the autophagy-related gene BmATG8 in Bipolaris maydis.</title>
        <authorList>
            <person name="Sumita T."/>
            <person name="Izumitsu K."/>
            <person name="Tanaka C."/>
        </authorList>
    </citation>
    <scope>FUNCTION</scope>
    <scope>DISRUPTION PHENOTYPE</scope>
</reference>
<sequence>MRSKFKDEHPFEKRKAEAERIRQKYNDRIPVICEKVEKSDIATIDKKKYLVPADLTVGQFVYVIRKRIKLSPEKAIFIFVDEVLPPTAALMSSIYEEHKDEDGFLYITYSGENTFGEAL</sequence>
<organism>
    <name type="scientific">Cochliobolus heterostrophus (strain C5 / ATCC 48332 / race O)</name>
    <name type="common">Southern corn leaf blight fungus</name>
    <name type="synonym">Bipolaris maydis</name>
    <dbReference type="NCBI Taxonomy" id="701091"/>
    <lineage>
        <taxon>Eukaryota</taxon>
        <taxon>Fungi</taxon>
        <taxon>Dikarya</taxon>
        <taxon>Ascomycota</taxon>
        <taxon>Pezizomycotina</taxon>
        <taxon>Dothideomycetes</taxon>
        <taxon>Pleosporomycetidae</taxon>
        <taxon>Pleosporales</taxon>
        <taxon>Pleosporineae</taxon>
        <taxon>Pleosporaceae</taxon>
        <taxon>Bipolaris</taxon>
    </lineage>
</organism>
<name>ATG8_COCH5</name>
<evidence type="ECO:0000250" key="1">
    <source>
        <dbReference type="UniProtKB" id="P38182"/>
    </source>
</evidence>
<evidence type="ECO:0000269" key="2">
    <source>
    </source>
</evidence>
<evidence type="ECO:0000303" key="3">
    <source>
    </source>
</evidence>
<evidence type="ECO:0000305" key="4"/>
<feature type="chain" id="PRO_0000443889" description="Autophagy-related protein 8">
    <location>
        <begin position="1"/>
        <end position="119"/>
    </location>
</feature>
<feature type="propeptide" id="PRO_0000443890" description="Removed in mature form" evidence="1">
    <location>
        <begin position="117"/>
        <end position="119"/>
    </location>
</feature>
<feature type="site" description="Cleavage; by ATG4" evidence="1">
    <location>
        <begin position="116"/>
        <end position="117"/>
    </location>
</feature>
<feature type="lipid moiety-binding region" description="Phosphatidylethanolamine amidated glycine" evidence="1">
    <location>
        <position position="116"/>
    </location>
</feature>
<dbReference type="EMBL" id="KB445582">
    <property type="protein sequence ID" value="EMD87485.1"/>
    <property type="molecule type" value="Genomic_DNA"/>
</dbReference>
<dbReference type="SMR" id="M2SQA5"/>
<dbReference type="STRING" id="701091.M2SQA5"/>
<dbReference type="eggNOG" id="KOG1654">
    <property type="taxonomic scope" value="Eukaryota"/>
</dbReference>
<dbReference type="HOGENOM" id="CLU_119276_0_1_1"/>
<dbReference type="OMA" id="AVYQEHK"/>
<dbReference type="OrthoDB" id="7585at28556"/>
<dbReference type="Proteomes" id="UP000016936">
    <property type="component" value="Unassembled WGS sequence"/>
</dbReference>
<dbReference type="GO" id="GO:0000421">
    <property type="term" value="C:autophagosome membrane"/>
    <property type="evidence" value="ECO:0007669"/>
    <property type="project" value="UniProtKB-SubCell"/>
</dbReference>
<dbReference type="GO" id="GO:0033110">
    <property type="term" value="C:Cvt vesicle membrane"/>
    <property type="evidence" value="ECO:0007669"/>
    <property type="project" value="UniProtKB-SubCell"/>
</dbReference>
<dbReference type="GO" id="GO:0006914">
    <property type="term" value="P:autophagy"/>
    <property type="evidence" value="ECO:0007669"/>
    <property type="project" value="UniProtKB-KW"/>
</dbReference>
<dbReference type="GO" id="GO:0015031">
    <property type="term" value="P:protein transport"/>
    <property type="evidence" value="ECO:0007669"/>
    <property type="project" value="UniProtKB-KW"/>
</dbReference>
<dbReference type="CDD" id="cd16128">
    <property type="entry name" value="Ubl_ATG8"/>
    <property type="match status" value="1"/>
</dbReference>
<dbReference type="FunFam" id="3.10.20.90:FF:000010">
    <property type="entry name" value="Autophagy-related protein"/>
    <property type="match status" value="1"/>
</dbReference>
<dbReference type="Gene3D" id="3.10.20.90">
    <property type="entry name" value="Phosphatidylinositol 3-kinase Catalytic Subunit, Chain A, domain 1"/>
    <property type="match status" value="1"/>
</dbReference>
<dbReference type="InterPro" id="IPR004241">
    <property type="entry name" value="Atg8-like"/>
</dbReference>
<dbReference type="InterPro" id="IPR029071">
    <property type="entry name" value="Ubiquitin-like_domsf"/>
</dbReference>
<dbReference type="PANTHER" id="PTHR10969">
    <property type="entry name" value="MICROTUBULE-ASSOCIATED PROTEINS 1A/1B LIGHT CHAIN 3-RELATED"/>
    <property type="match status" value="1"/>
</dbReference>
<dbReference type="Pfam" id="PF02991">
    <property type="entry name" value="ATG8"/>
    <property type="match status" value="1"/>
</dbReference>
<dbReference type="SUPFAM" id="SSF54236">
    <property type="entry name" value="Ubiquitin-like"/>
    <property type="match status" value="1"/>
</dbReference>
<accession>M2SQA5</accession>
<keyword id="KW-0072">Autophagy</keyword>
<keyword id="KW-0968">Cytoplasmic vesicle</keyword>
<keyword id="KW-0449">Lipoprotein</keyword>
<keyword id="KW-0472">Membrane</keyword>
<keyword id="KW-0653">Protein transport</keyword>
<keyword id="KW-1185">Reference proteome</keyword>
<keyword id="KW-0813">Transport</keyword>
<keyword id="KW-0926">Vacuole</keyword>
<comment type="function">
    <text evidence="1 2">Ubiquitin-like modifier involved in cytoplasm to vacuole transport (Cvt) vesicles and autophagosome formation (PubMed:28800850). With ATG4, mediates the delivery of the vesicles and autophagosomes to the vacuole via the microtubule cytoskeleton (By similarity). Required for selective autophagic degradation of the nucleus (nucleophagy) as well as for mitophagy which contributes to regulate mitochondrial quantity and quality by eliminating the mitochondria to a basal level to fulfill cellular energy requirements and preventing excess ROS production (By similarity). Also participates in membrane fusion events that take place in the early secretory pathway (By similarity). Also involved in endoplasmic reticulum-specific autophagic process and is essential for the survival of cells subjected to severe ER stress (By similarity). The ATG8-PE conjugate mediates tethering between adjacent membranes and stimulates membrane hemifusion, leading to expansion of the autophagosomal membrane during autophagy (By similarity). Moreover not only conjugation, but also subsequent ATG8-PE deconjugation is an important step required to facilitate multiple events during macroautophagy, and especially for efficient autophagosome biogenesis, the assembly of ATG9-containing tubulovesicular clusters into phagophores/autophagosomes, and for the disassembly of PAS-associated ATG components (By similarity). Autophagy is required for conidiation, aerial mycelial growth, and pseudothecia formation, but not for host invasion (PubMed:28800850).</text>
</comment>
<comment type="subunit">
    <text evidence="1">Conjugation to phosphatidylethanolamine (PE) leads to homodimerization (By similarity). Interacts with ATG1, ATG3, ATG4, ATG7 and ATG12 (By similarity).</text>
</comment>
<comment type="subcellular location">
    <subcellularLocation>
        <location evidence="1">Cytoplasmic vesicle</location>
        <location evidence="1">Cvt vesicle membrane</location>
        <topology evidence="1">Lipid-anchor</topology>
    </subcellularLocation>
    <subcellularLocation>
        <location evidence="1">Cytoplasmic vesicle</location>
        <location evidence="1">Autophagosome membrane</location>
        <topology evidence="1">Lipid-anchor</topology>
    </subcellularLocation>
    <subcellularLocation>
        <location evidence="1">Vacuole membrane</location>
        <topology evidence="1">Lipid-anchor</topology>
    </subcellularLocation>
    <text evidence="1">Membrane-associated through a lipid anchor (By similarity). This association needs the 2 ubiquitin-like systems required for cytoplasm to vacuole transport and autophagy (By similarity). Localizes to both the isolation membrane (IM) and the vacuole-isolation membrane contact site (VICS) during IM expansion (By similarity). The IM is a membrane sac generated from the pre-autophagosomal structure that ultimately expands to become a mature autophagosome (By similarity).</text>
</comment>
<comment type="PTM">
    <text evidence="1">The C-terminal Glu-117, Ala-118 and Leu-119 residues of ATG8 are removed by ATG4 to expose Gly-116 at the C-terminus (By similarity). This Gly-116 forms then a thioester bond with ATG7 (E1-like activating enzyme) before being transferred to ATG3 (the specific E2 conjugating enzyme), in order to be finally amidated with phosphatidylethanolamine (By similarity). This lipid modification anchors ATG8 to membranes and can be reversed by ATG4, releasing soluble ATG8 (By similarity).</text>
</comment>
<comment type="disruption phenotype">
    <text evidence="2">Leads to deficient autophagy (PubMed:28800850). Impairs conidial germination under starvation conditions, conidial longevity, and ascospore maturation (PubMed:28800850).</text>
</comment>
<comment type="similarity">
    <text evidence="4">Belongs to the ATG8 family.</text>
</comment>
<gene>
    <name evidence="3" type="primary">ATG8</name>
    <name type="ORF">COCHEDRAFT_1184566</name>
</gene>
<proteinExistence type="inferred from homology"/>